<proteinExistence type="evidence at protein level"/>
<evidence type="ECO:0000250" key="1">
    <source>
        <dbReference type="UniProtKB" id="P78371"/>
    </source>
</evidence>
<evidence type="ECO:0000250" key="2">
    <source>
        <dbReference type="UniProtKB" id="P80314"/>
    </source>
</evidence>
<evidence type="ECO:0000255" key="3"/>
<evidence type="ECO:0000305" key="4"/>
<keyword id="KW-0067">ATP-binding</keyword>
<keyword id="KW-0143">Chaperone</keyword>
<keyword id="KW-0963">Cytoplasm</keyword>
<keyword id="KW-0378">Hydrolase</keyword>
<keyword id="KW-0460">Magnesium</keyword>
<keyword id="KW-0479">Metal-binding</keyword>
<keyword id="KW-0547">Nucleotide-binding</keyword>
<keyword id="KW-1185">Reference proteome</keyword>
<accession>P86245</accession>
<dbReference type="EC" id="3.6.1.-" evidence="1"/>
<dbReference type="SMR" id="P86245"/>
<dbReference type="IntAct" id="P86245">
    <property type="interactions" value="1"/>
</dbReference>
<dbReference type="STRING" id="10036.ENSMAUP00000010734"/>
<dbReference type="Proteomes" id="UP000189706">
    <property type="component" value="Unplaced"/>
</dbReference>
<dbReference type="GO" id="GO:0005832">
    <property type="term" value="C:chaperonin-containing T-complex"/>
    <property type="evidence" value="ECO:0000250"/>
    <property type="project" value="UniProtKB"/>
</dbReference>
<dbReference type="GO" id="GO:0005524">
    <property type="term" value="F:ATP binding"/>
    <property type="evidence" value="ECO:0007669"/>
    <property type="project" value="UniProtKB-KW"/>
</dbReference>
<dbReference type="GO" id="GO:0016887">
    <property type="term" value="F:ATP hydrolysis activity"/>
    <property type="evidence" value="ECO:0007669"/>
    <property type="project" value="InterPro"/>
</dbReference>
<dbReference type="GO" id="GO:0140662">
    <property type="term" value="F:ATP-dependent protein folding chaperone"/>
    <property type="evidence" value="ECO:0007669"/>
    <property type="project" value="InterPro"/>
</dbReference>
<dbReference type="GO" id="GO:0051082">
    <property type="term" value="F:unfolded protein binding"/>
    <property type="evidence" value="ECO:0007669"/>
    <property type="project" value="InterPro"/>
</dbReference>
<dbReference type="Gene3D" id="3.50.7.10">
    <property type="entry name" value="GroEL"/>
    <property type="match status" value="1"/>
</dbReference>
<dbReference type="Gene3D" id="1.10.560.10">
    <property type="entry name" value="GroEL-like equatorial domain"/>
    <property type="match status" value="1"/>
</dbReference>
<dbReference type="InterPro" id="IPR017998">
    <property type="entry name" value="Chaperone_TCP-1"/>
</dbReference>
<dbReference type="InterPro" id="IPR002194">
    <property type="entry name" value="Chaperonin_TCP-1_CS"/>
</dbReference>
<dbReference type="InterPro" id="IPR027409">
    <property type="entry name" value="GroEL-like_apical_dom_sf"/>
</dbReference>
<dbReference type="InterPro" id="IPR027413">
    <property type="entry name" value="GROEL-like_equatorial_sf"/>
</dbReference>
<dbReference type="PANTHER" id="PTHR11353">
    <property type="entry name" value="CHAPERONIN"/>
    <property type="match status" value="1"/>
</dbReference>
<dbReference type="SUPFAM" id="SSF48592">
    <property type="entry name" value="GroEL equatorial domain-like"/>
    <property type="match status" value="1"/>
</dbReference>
<dbReference type="PROSITE" id="PS00995">
    <property type="entry name" value="TCP1_3"/>
    <property type="match status" value="1"/>
</dbReference>
<feature type="chain" id="PRO_0000394423" description="T-complex protein 1 subunit beta">
    <location>
        <begin position="1" status="less than"/>
        <end position="150" status="greater than"/>
    </location>
</feature>
<feature type="binding site" evidence="1">
    <location>
        <position position="35"/>
    </location>
    <ligand>
        <name>Mg(2+)</name>
        <dbReference type="ChEBI" id="CHEBI:18420"/>
    </ligand>
</feature>
<feature type="binding site" evidence="1">
    <location>
        <position position="36"/>
    </location>
    <ligand>
        <name>ADP</name>
        <dbReference type="ChEBI" id="CHEBI:456216"/>
    </ligand>
</feature>
<feature type="binding site" evidence="1">
    <location>
        <position position="36"/>
    </location>
    <ligand>
        <name>ATP</name>
        <dbReference type="ChEBI" id="CHEBI:30616"/>
    </ligand>
</feature>
<feature type="binding site" evidence="1">
    <location>
        <position position="37"/>
    </location>
    <ligand>
        <name>ADP</name>
        <dbReference type="ChEBI" id="CHEBI:456216"/>
    </ligand>
</feature>
<feature type="binding site" evidence="1">
    <location>
        <position position="37"/>
    </location>
    <ligand>
        <name>ATP</name>
        <dbReference type="ChEBI" id="CHEBI:30616"/>
    </ligand>
</feature>
<feature type="binding site" evidence="1">
    <location>
        <position position="38"/>
    </location>
    <ligand>
        <name>ADP</name>
        <dbReference type="ChEBI" id="CHEBI:456216"/>
    </ligand>
</feature>
<feature type="binding site" evidence="1">
    <location>
        <position position="38"/>
    </location>
    <ligand>
        <name>ATP</name>
        <dbReference type="ChEBI" id="CHEBI:30616"/>
    </ligand>
</feature>
<feature type="binding site" evidence="1">
    <location>
        <position position="39"/>
    </location>
    <ligand>
        <name>ADP</name>
        <dbReference type="ChEBI" id="CHEBI:456216"/>
    </ligand>
</feature>
<feature type="non-consecutive residues" evidence="4">
    <location>
        <begin position="27"/>
        <end position="28"/>
    </location>
</feature>
<feature type="non-consecutive residues" evidence="4">
    <location>
        <begin position="49"/>
        <end position="50"/>
    </location>
</feature>
<feature type="non-consecutive residues" evidence="4">
    <location>
        <begin position="68"/>
        <end position="69"/>
    </location>
</feature>
<feature type="non-consecutive residues" evidence="4">
    <location>
        <begin position="117"/>
        <end position="118"/>
    </location>
</feature>
<feature type="non-consecutive residues" evidence="4">
    <location>
        <begin position="129"/>
        <end position="130"/>
    </location>
</feature>
<feature type="non-terminal residue">
    <location>
        <position position="1"/>
    </location>
</feature>
<feature type="non-terminal residue">
    <location>
        <position position="150"/>
    </location>
</feature>
<sequence>AGADEERAETARLSSFIGAIAIGDLVKVQDDEVGDGTTSVTVLAAELLRLGGSLADSYLDEGFLLDKKQLIYNYPEQLFGAAGVMAIEHADFAGVERLALVTGGEIASTFDHPELVKGATQQILDEAERQVLLSAAEAAEVILRVDNIIK</sequence>
<protein>
    <recommendedName>
        <fullName evidence="1">T-complex protein 1 subunit beta</fullName>
        <shortName evidence="1">TCP-1-beta</shortName>
        <ecNumber evidence="1">3.6.1.-</ecNumber>
    </recommendedName>
    <alternativeName>
        <fullName evidence="1">CCT-beta</fullName>
    </alternativeName>
</protein>
<name>TCPB_MESAU</name>
<reference key="1">
    <citation type="journal article" date="2010" name="Asian J. Androl.">
        <title>Glucose-regulated protein precursor (GRP78) and tumor rejection antigen (GP96) are unique to hamster caput epididymal spermatozoa.</title>
        <authorList>
            <person name="Kameshwari D.B."/>
            <person name="Bhande S."/>
            <person name="Sundaram C.S."/>
            <person name="Kota V."/>
            <person name="Siva A.B."/>
            <person name="Shivaji S."/>
        </authorList>
    </citation>
    <scope>IDENTIFICATION BY MASS SPECTROMETRY</scope>
</reference>
<gene>
    <name evidence="1" type="primary">CCT2</name>
</gene>
<comment type="function">
    <text evidence="1">Component of the chaperonin-containing T-complex (TRiC), a molecular chaperone complex that assists the folding of actin, tubulin and other proteins upon ATP hydrolysis. The TRiC complex mediates the folding of WRAP53/TCAB1, thereby regulating telomere maintenance. As part of the TRiC complex may play a role in the assembly of BBSome, a complex involved in ciliogenesis regulating transports vesicles to the cilia.</text>
</comment>
<comment type="catalytic activity">
    <reaction evidence="1">
        <text>ATP + H2O = ADP + phosphate + H(+)</text>
        <dbReference type="Rhea" id="RHEA:13065"/>
        <dbReference type="ChEBI" id="CHEBI:15377"/>
        <dbReference type="ChEBI" id="CHEBI:15378"/>
        <dbReference type="ChEBI" id="CHEBI:30616"/>
        <dbReference type="ChEBI" id="CHEBI:43474"/>
        <dbReference type="ChEBI" id="CHEBI:456216"/>
    </reaction>
</comment>
<comment type="subunit">
    <text evidence="1 2">Component of the chaperonin-containing T-complex (TRiC), a hexadecamer composed of two identical back-to-back stacked rings enclosing a protein folding chamber. Each ring is made up of eight different subunits: TCP1/CCT1, CCT2, CCT3, CCT4, CCT5, CCT6A/CCT6, CCT7, CCT8. Interacts with PACRG. Interacts with FLCN. Interacts with DLEC1 (By similarity). Interacts with SVEP1 (By similarity).</text>
</comment>
<comment type="subcellular location">
    <subcellularLocation>
        <location evidence="1">Cytoplasm</location>
    </subcellularLocation>
</comment>
<comment type="similarity">
    <text evidence="3">Belongs to the TCP-1 chaperonin family.</text>
</comment>
<organism>
    <name type="scientific">Mesocricetus auratus</name>
    <name type="common">Golden hamster</name>
    <dbReference type="NCBI Taxonomy" id="10036"/>
    <lineage>
        <taxon>Eukaryota</taxon>
        <taxon>Metazoa</taxon>
        <taxon>Chordata</taxon>
        <taxon>Craniata</taxon>
        <taxon>Vertebrata</taxon>
        <taxon>Euteleostomi</taxon>
        <taxon>Mammalia</taxon>
        <taxon>Eutheria</taxon>
        <taxon>Euarchontoglires</taxon>
        <taxon>Glires</taxon>
        <taxon>Rodentia</taxon>
        <taxon>Myomorpha</taxon>
        <taxon>Muroidea</taxon>
        <taxon>Cricetidae</taxon>
        <taxon>Cricetinae</taxon>
        <taxon>Mesocricetus</taxon>
    </lineage>
</organism>